<name>ATP22_CANGA</name>
<feature type="transit peptide" description="Mitochondrion" evidence="2">
    <location>
        <begin position="1"/>
        <end status="unknown"/>
    </location>
</feature>
<feature type="chain" id="PRO_0000330046" description="Mitochondrial translation factor ATP22">
    <location>
        <begin status="unknown"/>
        <end position="573"/>
    </location>
</feature>
<keyword id="KW-0472">Membrane</keyword>
<keyword id="KW-0496">Mitochondrion</keyword>
<keyword id="KW-0999">Mitochondrion inner membrane</keyword>
<keyword id="KW-1185">Reference proteome</keyword>
<keyword id="KW-0809">Transit peptide</keyword>
<keyword id="KW-0810">Translation regulation</keyword>
<evidence type="ECO:0000250" key="1"/>
<evidence type="ECO:0000255" key="2"/>
<evidence type="ECO:0000305" key="3"/>
<gene>
    <name type="primary">ATP22</name>
    <name type="ordered locus">CAGL0A02475g</name>
</gene>
<comment type="function">
    <text evidence="1">Translation factor specific for subunit 6 of the mitochondrial ATPase. Required for assembly of the CF(0) component of the ATPase (By similarity).</text>
</comment>
<comment type="subcellular location">
    <subcellularLocation>
        <location evidence="1">Mitochondrion inner membrane</location>
        <topology evidence="1">Peripheral membrane protein</topology>
        <orientation evidence="1">Matrix side</orientation>
    </subcellularLocation>
</comment>
<comment type="similarity">
    <text evidence="3">Belongs to the ATP22 family.</text>
</comment>
<protein>
    <recommendedName>
        <fullName>Mitochondrial translation factor ATP22</fullName>
    </recommendedName>
</protein>
<dbReference type="EMBL" id="CR380947">
    <property type="protein sequence ID" value="CAG57764.1"/>
    <property type="molecule type" value="Genomic_DNA"/>
</dbReference>
<dbReference type="RefSeq" id="XP_444871.1">
    <property type="nucleotide sequence ID" value="XM_444871.1"/>
</dbReference>
<dbReference type="FunCoup" id="Q6FY31">
    <property type="interactions" value="35"/>
</dbReference>
<dbReference type="STRING" id="284593.Q6FY31"/>
<dbReference type="EnsemblFungi" id="CAGL0A02475g-T">
    <property type="protein sequence ID" value="CAGL0A02475g-T-p1"/>
    <property type="gene ID" value="CAGL0A02475g"/>
</dbReference>
<dbReference type="KEGG" id="cgr:2886431"/>
<dbReference type="CGD" id="CAL0126967">
    <property type="gene designation" value="ATP22"/>
</dbReference>
<dbReference type="VEuPathDB" id="FungiDB:CAGL0A02475g"/>
<dbReference type="eggNOG" id="ENOG502QUX9">
    <property type="taxonomic scope" value="Eukaryota"/>
</dbReference>
<dbReference type="HOGENOM" id="CLU_024415_0_0_1"/>
<dbReference type="InParanoid" id="Q6FY31"/>
<dbReference type="OMA" id="HINNCSE"/>
<dbReference type="Proteomes" id="UP000002428">
    <property type="component" value="Chromosome A"/>
</dbReference>
<dbReference type="GO" id="GO:0005743">
    <property type="term" value="C:mitochondrial inner membrane"/>
    <property type="evidence" value="ECO:0007669"/>
    <property type="project" value="UniProtKB-SubCell"/>
</dbReference>
<dbReference type="GO" id="GO:0005739">
    <property type="term" value="C:mitochondrion"/>
    <property type="evidence" value="ECO:0000315"/>
    <property type="project" value="CGD"/>
</dbReference>
<dbReference type="GO" id="GO:0045182">
    <property type="term" value="F:translation regulator activity"/>
    <property type="evidence" value="ECO:0007669"/>
    <property type="project" value="EnsemblFungi"/>
</dbReference>
<dbReference type="GO" id="GO:0042775">
    <property type="term" value="P:mitochondrial ATP synthesis coupled electron transport"/>
    <property type="evidence" value="ECO:0000315"/>
    <property type="project" value="CGD"/>
</dbReference>
<dbReference type="GO" id="GO:0070131">
    <property type="term" value="P:positive regulation of mitochondrial translation"/>
    <property type="evidence" value="ECO:0007669"/>
    <property type="project" value="EnsemblFungi"/>
</dbReference>
<dbReference type="GO" id="GO:0070071">
    <property type="term" value="P:proton-transporting two-sector ATPase complex assembly"/>
    <property type="evidence" value="ECO:0007669"/>
    <property type="project" value="EnsemblFungi"/>
</dbReference>
<dbReference type="InterPro" id="IPR017207">
    <property type="entry name" value="Atp22"/>
</dbReference>
<dbReference type="PIRSF" id="PIRSF037437">
    <property type="entry name" value="Atp22"/>
    <property type="match status" value="1"/>
</dbReference>
<reference key="1">
    <citation type="journal article" date="2004" name="Nature">
        <title>Genome evolution in yeasts.</title>
        <authorList>
            <person name="Dujon B."/>
            <person name="Sherman D."/>
            <person name="Fischer G."/>
            <person name="Durrens P."/>
            <person name="Casaregola S."/>
            <person name="Lafontaine I."/>
            <person name="de Montigny J."/>
            <person name="Marck C."/>
            <person name="Neuveglise C."/>
            <person name="Talla E."/>
            <person name="Goffard N."/>
            <person name="Frangeul L."/>
            <person name="Aigle M."/>
            <person name="Anthouard V."/>
            <person name="Babour A."/>
            <person name="Barbe V."/>
            <person name="Barnay S."/>
            <person name="Blanchin S."/>
            <person name="Beckerich J.-M."/>
            <person name="Beyne E."/>
            <person name="Bleykasten C."/>
            <person name="Boisrame A."/>
            <person name="Boyer J."/>
            <person name="Cattolico L."/>
            <person name="Confanioleri F."/>
            <person name="de Daruvar A."/>
            <person name="Despons L."/>
            <person name="Fabre E."/>
            <person name="Fairhead C."/>
            <person name="Ferry-Dumazet H."/>
            <person name="Groppi A."/>
            <person name="Hantraye F."/>
            <person name="Hennequin C."/>
            <person name="Jauniaux N."/>
            <person name="Joyet P."/>
            <person name="Kachouri R."/>
            <person name="Kerrest A."/>
            <person name="Koszul R."/>
            <person name="Lemaire M."/>
            <person name="Lesur I."/>
            <person name="Ma L."/>
            <person name="Muller H."/>
            <person name="Nicaud J.-M."/>
            <person name="Nikolski M."/>
            <person name="Oztas S."/>
            <person name="Ozier-Kalogeropoulos O."/>
            <person name="Pellenz S."/>
            <person name="Potier S."/>
            <person name="Richard G.-F."/>
            <person name="Straub M.-L."/>
            <person name="Suleau A."/>
            <person name="Swennen D."/>
            <person name="Tekaia F."/>
            <person name="Wesolowski-Louvel M."/>
            <person name="Westhof E."/>
            <person name="Wirth B."/>
            <person name="Zeniou-Meyer M."/>
            <person name="Zivanovic Y."/>
            <person name="Bolotin-Fukuhara M."/>
            <person name="Thierry A."/>
            <person name="Bouchier C."/>
            <person name="Caudron B."/>
            <person name="Scarpelli C."/>
            <person name="Gaillardin C."/>
            <person name="Weissenbach J."/>
            <person name="Wincker P."/>
            <person name="Souciet J.-L."/>
        </authorList>
    </citation>
    <scope>NUCLEOTIDE SEQUENCE [LARGE SCALE GENOMIC DNA]</scope>
    <source>
        <strain>ATCC 2001 / BCRC 20586 / JCM 3761 / NBRC 0622 / NRRL Y-65 / CBS 138</strain>
    </source>
</reference>
<organism>
    <name type="scientific">Candida glabrata (strain ATCC 2001 / BCRC 20586 / JCM 3761 / NBRC 0622 / NRRL Y-65 / CBS 138)</name>
    <name type="common">Yeast</name>
    <name type="synonym">Nakaseomyces glabratus</name>
    <dbReference type="NCBI Taxonomy" id="284593"/>
    <lineage>
        <taxon>Eukaryota</taxon>
        <taxon>Fungi</taxon>
        <taxon>Dikarya</taxon>
        <taxon>Ascomycota</taxon>
        <taxon>Saccharomycotina</taxon>
        <taxon>Saccharomycetes</taxon>
        <taxon>Saccharomycetales</taxon>
        <taxon>Saccharomycetaceae</taxon>
        <taxon>Nakaseomyces</taxon>
    </lineage>
</organism>
<proteinExistence type="inferred from homology"/>
<accession>Q6FY31</accession>
<sequence length="573" mass="66741">MMGRVNSQLLRVVQDRSVANGEKLQRLYKLISATGSKTATATTTATTTTTATATGGGRVLALDSHVHRWFNTHVRGSKFYSHYHFLIKHGVHLAHATRFFNKLLTGSEVEFQLATFQIFLINEENQQVFFEKFHRLYTFDMMLQIFDRLIARRDFRYVKFYLAALTRKMSELATDRTRTVQDAELMYIKFNNSLLYYLLMEGNVPMFLRTFKNEVEYIKSSTLQNSDSAEVQQALLKPVHLFVQMLRKNNSPDLIFELLPALQTKSRSKVFNAYLTSTVASTIRTFNDPTLMLKFLLTTAKGTKFPELLNELGLWRYIVHGEPGKIDPKSLQEDRDKFEKANSVSALKAMKRVDVVLLTELYRVFLSYSSSVMSPDKFRHCCIDLYSHYVQFCEQNKHKLRGWKFDTGVLNVILYHIRYRLRDDKLAYEVLVDFYGRESMVQSVKNTAKKCPFSMVIYDNGTVTTQQLHALLQLMQRYNVPLSFQICYTMVKRLLQMNEPEQAFEWYTRILESGFDVRHHGLVELVLQQGWSLPHHFNHDLLEDDKLDSIIEEEPTEECAELVEDVKELMQSV</sequence>